<accession>Q5WWS9</accession>
<dbReference type="EC" id="2.5.1.19" evidence="1"/>
<dbReference type="EMBL" id="CR628337">
    <property type="protein sequence ID" value="CAH15610.1"/>
    <property type="molecule type" value="Genomic_DNA"/>
</dbReference>
<dbReference type="RefSeq" id="WP_011215434.1">
    <property type="nucleotide sequence ID" value="NC_006369.1"/>
</dbReference>
<dbReference type="SMR" id="Q5WWS9"/>
<dbReference type="KEGG" id="lpf:lpl1370"/>
<dbReference type="LegioList" id="lpl1370"/>
<dbReference type="HOGENOM" id="CLU_024321_0_1_6"/>
<dbReference type="UniPathway" id="UPA00053">
    <property type="reaction ID" value="UER00089"/>
</dbReference>
<dbReference type="Proteomes" id="UP000002517">
    <property type="component" value="Chromosome"/>
</dbReference>
<dbReference type="GO" id="GO:0005737">
    <property type="term" value="C:cytoplasm"/>
    <property type="evidence" value="ECO:0007669"/>
    <property type="project" value="UniProtKB-SubCell"/>
</dbReference>
<dbReference type="GO" id="GO:0003866">
    <property type="term" value="F:3-phosphoshikimate 1-carboxyvinyltransferase activity"/>
    <property type="evidence" value="ECO:0007669"/>
    <property type="project" value="UniProtKB-UniRule"/>
</dbReference>
<dbReference type="GO" id="GO:0008652">
    <property type="term" value="P:amino acid biosynthetic process"/>
    <property type="evidence" value="ECO:0007669"/>
    <property type="project" value="UniProtKB-KW"/>
</dbReference>
<dbReference type="GO" id="GO:0009073">
    <property type="term" value="P:aromatic amino acid family biosynthetic process"/>
    <property type="evidence" value="ECO:0007669"/>
    <property type="project" value="UniProtKB-KW"/>
</dbReference>
<dbReference type="GO" id="GO:0009423">
    <property type="term" value="P:chorismate biosynthetic process"/>
    <property type="evidence" value="ECO:0007669"/>
    <property type="project" value="UniProtKB-UniRule"/>
</dbReference>
<dbReference type="CDD" id="cd01556">
    <property type="entry name" value="EPSP_synthase"/>
    <property type="match status" value="1"/>
</dbReference>
<dbReference type="FunFam" id="3.65.10.10:FF:000005">
    <property type="entry name" value="3-phosphoshikimate 1-carboxyvinyltransferase"/>
    <property type="match status" value="1"/>
</dbReference>
<dbReference type="FunFam" id="3.65.10.10:FF:000006">
    <property type="entry name" value="3-phosphoshikimate 1-carboxyvinyltransferase"/>
    <property type="match status" value="1"/>
</dbReference>
<dbReference type="Gene3D" id="3.65.10.10">
    <property type="entry name" value="Enolpyruvate transferase domain"/>
    <property type="match status" value="2"/>
</dbReference>
<dbReference type="HAMAP" id="MF_00210">
    <property type="entry name" value="EPSP_synth"/>
    <property type="match status" value="1"/>
</dbReference>
<dbReference type="InterPro" id="IPR001986">
    <property type="entry name" value="Enolpyruvate_Tfrase_dom"/>
</dbReference>
<dbReference type="InterPro" id="IPR036968">
    <property type="entry name" value="Enolpyruvate_Tfrase_sf"/>
</dbReference>
<dbReference type="InterPro" id="IPR006264">
    <property type="entry name" value="EPSP_synthase"/>
</dbReference>
<dbReference type="InterPro" id="IPR023193">
    <property type="entry name" value="EPSP_synthase_CS"/>
</dbReference>
<dbReference type="InterPro" id="IPR013792">
    <property type="entry name" value="RNA3'P_cycl/enolpyr_Trfase_a/b"/>
</dbReference>
<dbReference type="NCBIfam" id="TIGR01356">
    <property type="entry name" value="aroA"/>
    <property type="match status" value="1"/>
</dbReference>
<dbReference type="PANTHER" id="PTHR21090">
    <property type="entry name" value="AROM/DEHYDROQUINATE SYNTHASE"/>
    <property type="match status" value="1"/>
</dbReference>
<dbReference type="PANTHER" id="PTHR21090:SF5">
    <property type="entry name" value="PENTAFUNCTIONAL AROM POLYPEPTIDE"/>
    <property type="match status" value="1"/>
</dbReference>
<dbReference type="Pfam" id="PF00275">
    <property type="entry name" value="EPSP_synthase"/>
    <property type="match status" value="1"/>
</dbReference>
<dbReference type="PIRSF" id="PIRSF000505">
    <property type="entry name" value="EPSPS"/>
    <property type="match status" value="1"/>
</dbReference>
<dbReference type="SUPFAM" id="SSF55205">
    <property type="entry name" value="EPT/RTPC-like"/>
    <property type="match status" value="1"/>
</dbReference>
<dbReference type="PROSITE" id="PS00104">
    <property type="entry name" value="EPSP_SYNTHASE_1"/>
    <property type="match status" value="1"/>
</dbReference>
<dbReference type="PROSITE" id="PS00885">
    <property type="entry name" value="EPSP_SYNTHASE_2"/>
    <property type="match status" value="1"/>
</dbReference>
<proteinExistence type="inferred from homology"/>
<sequence>MLNFISKPVGCLKGEITVPGDKSISHRSIIFGAIAIGTSVIDGFLDGEDCIATLKAFQSMGVRIEGPDKQRVIIHGVGKYGLKQPQNIIDCGNSGTSMRLLAGLLAAQQFDSQLTGDESLLKRPMLRISRPLSQMGADVTTQDGKPPIVIKGGKKLNGVHYVMPEASAQVKSCLLLAGMYAEGQTKITENAVSRDHTERMLRTFSYPVQIQDGTIVIDRNGECHGTRLNIPGDISSAAFFIVAASITPDSDVLIRNVGINPTRTGIIHILTEMGADIRILNQRAYGEEPVADLHIRYSQLKGIDIPVSMVPLAIDEFPVIFIAAACAQGKTTLHGAKELRLKESDRIGAMVDGLNQLGVHAEGFDDGILIEGGSIQGGEVNSRGDHRIAMSFAIAGAVASAPVTIKNCANVATSFPSFVTTANMLHFQIEEYS</sequence>
<reference key="1">
    <citation type="journal article" date="2004" name="Nat. Genet.">
        <title>Evidence in the Legionella pneumophila genome for exploitation of host cell functions and high genome plasticity.</title>
        <authorList>
            <person name="Cazalet C."/>
            <person name="Rusniok C."/>
            <person name="Brueggemann H."/>
            <person name="Zidane N."/>
            <person name="Magnier A."/>
            <person name="Ma L."/>
            <person name="Tichit M."/>
            <person name="Jarraud S."/>
            <person name="Bouchier C."/>
            <person name="Vandenesch F."/>
            <person name="Kunst F."/>
            <person name="Etienne J."/>
            <person name="Glaser P."/>
            <person name="Buchrieser C."/>
        </authorList>
    </citation>
    <scope>NUCLEOTIDE SEQUENCE [LARGE SCALE GENOMIC DNA]</scope>
    <source>
        <strain>Lens</strain>
    </source>
</reference>
<protein>
    <recommendedName>
        <fullName evidence="1">3-phosphoshikimate 1-carboxyvinyltransferase</fullName>
        <ecNumber evidence="1">2.5.1.19</ecNumber>
    </recommendedName>
    <alternativeName>
        <fullName evidence="1">5-enolpyruvylshikimate-3-phosphate synthase</fullName>
        <shortName evidence="1">EPSP synthase</shortName>
        <shortName evidence="1">EPSPS</shortName>
    </alternativeName>
</protein>
<feature type="chain" id="PRO_0000325355" description="3-phosphoshikimate 1-carboxyvinyltransferase">
    <location>
        <begin position="1"/>
        <end position="433"/>
    </location>
</feature>
<feature type="active site" description="Proton acceptor" evidence="1">
    <location>
        <position position="315"/>
    </location>
</feature>
<feature type="binding site" evidence="1">
    <location>
        <position position="22"/>
    </location>
    <ligand>
        <name>3-phosphoshikimate</name>
        <dbReference type="ChEBI" id="CHEBI:145989"/>
    </ligand>
</feature>
<feature type="binding site" evidence="1">
    <location>
        <position position="22"/>
    </location>
    <ligand>
        <name>phosphoenolpyruvate</name>
        <dbReference type="ChEBI" id="CHEBI:58702"/>
    </ligand>
</feature>
<feature type="binding site" evidence="1">
    <location>
        <position position="23"/>
    </location>
    <ligand>
        <name>3-phosphoshikimate</name>
        <dbReference type="ChEBI" id="CHEBI:145989"/>
    </ligand>
</feature>
<feature type="binding site" evidence="1">
    <location>
        <position position="27"/>
    </location>
    <ligand>
        <name>3-phosphoshikimate</name>
        <dbReference type="ChEBI" id="CHEBI:145989"/>
    </ligand>
</feature>
<feature type="binding site" evidence="1">
    <location>
        <position position="95"/>
    </location>
    <ligand>
        <name>phosphoenolpyruvate</name>
        <dbReference type="ChEBI" id="CHEBI:58702"/>
    </ligand>
</feature>
<feature type="binding site" evidence="1">
    <location>
        <position position="123"/>
    </location>
    <ligand>
        <name>phosphoenolpyruvate</name>
        <dbReference type="ChEBI" id="CHEBI:58702"/>
    </ligand>
</feature>
<feature type="binding site" evidence="1">
    <location>
        <position position="167"/>
    </location>
    <ligand>
        <name>3-phosphoshikimate</name>
        <dbReference type="ChEBI" id="CHEBI:145989"/>
    </ligand>
</feature>
<feature type="binding site" evidence="1">
    <location>
        <position position="169"/>
    </location>
    <ligand>
        <name>3-phosphoshikimate</name>
        <dbReference type="ChEBI" id="CHEBI:145989"/>
    </ligand>
</feature>
<feature type="binding site" evidence="1">
    <location>
        <position position="169"/>
    </location>
    <ligand>
        <name>phosphoenolpyruvate</name>
        <dbReference type="ChEBI" id="CHEBI:58702"/>
    </ligand>
</feature>
<feature type="binding site" evidence="1">
    <location>
        <position position="315"/>
    </location>
    <ligand>
        <name>3-phosphoshikimate</name>
        <dbReference type="ChEBI" id="CHEBI:145989"/>
    </ligand>
</feature>
<feature type="binding site" evidence="1">
    <location>
        <position position="342"/>
    </location>
    <ligand>
        <name>3-phosphoshikimate</name>
        <dbReference type="ChEBI" id="CHEBI:145989"/>
    </ligand>
</feature>
<feature type="binding site" evidence="1">
    <location>
        <position position="346"/>
    </location>
    <ligand>
        <name>phosphoenolpyruvate</name>
        <dbReference type="ChEBI" id="CHEBI:58702"/>
    </ligand>
</feature>
<feature type="binding site" evidence="1">
    <location>
        <position position="387"/>
    </location>
    <ligand>
        <name>phosphoenolpyruvate</name>
        <dbReference type="ChEBI" id="CHEBI:58702"/>
    </ligand>
</feature>
<keyword id="KW-0028">Amino-acid biosynthesis</keyword>
<keyword id="KW-0057">Aromatic amino acid biosynthesis</keyword>
<keyword id="KW-0963">Cytoplasm</keyword>
<keyword id="KW-0808">Transferase</keyword>
<organism>
    <name type="scientific">Legionella pneumophila (strain Lens)</name>
    <dbReference type="NCBI Taxonomy" id="297245"/>
    <lineage>
        <taxon>Bacteria</taxon>
        <taxon>Pseudomonadati</taxon>
        <taxon>Pseudomonadota</taxon>
        <taxon>Gammaproteobacteria</taxon>
        <taxon>Legionellales</taxon>
        <taxon>Legionellaceae</taxon>
        <taxon>Legionella</taxon>
    </lineage>
</organism>
<comment type="function">
    <text evidence="1">Catalyzes the transfer of the enolpyruvyl moiety of phosphoenolpyruvate (PEP) to the 5-hydroxyl of shikimate-3-phosphate (S3P) to produce enolpyruvyl shikimate-3-phosphate and inorganic phosphate.</text>
</comment>
<comment type="catalytic activity">
    <reaction evidence="1">
        <text>3-phosphoshikimate + phosphoenolpyruvate = 5-O-(1-carboxyvinyl)-3-phosphoshikimate + phosphate</text>
        <dbReference type="Rhea" id="RHEA:21256"/>
        <dbReference type="ChEBI" id="CHEBI:43474"/>
        <dbReference type="ChEBI" id="CHEBI:57701"/>
        <dbReference type="ChEBI" id="CHEBI:58702"/>
        <dbReference type="ChEBI" id="CHEBI:145989"/>
        <dbReference type="EC" id="2.5.1.19"/>
    </reaction>
    <physiologicalReaction direction="left-to-right" evidence="1">
        <dbReference type="Rhea" id="RHEA:21257"/>
    </physiologicalReaction>
</comment>
<comment type="pathway">
    <text evidence="1">Metabolic intermediate biosynthesis; chorismate biosynthesis; chorismate from D-erythrose 4-phosphate and phosphoenolpyruvate: step 6/7.</text>
</comment>
<comment type="subunit">
    <text evidence="1">Monomer.</text>
</comment>
<comment type="subcellular location">
    <subcellularLocation>
        <location evidence="1">Cytoplasm</location>
    </subcellularLocation>
</comment>
<comment type="similarity">
    <text evidence="1">Belongs to the EPSP synthase family.</text>
</comment>
<evidence type="ECO:0000255" key="1">
    <source>
        <dbReference type="HAMAP-Rule" id="MF_00210"/>
    </source>
</evidence>
<name>AROA_LEGPL</name>
<gene>
    <name evidence="1" type="primary">aroA</name>
    <name type="ordered locus">lpl1370</name>
</gene>